<feature type="chain" id="PRO_0000111577" description="Ribonuclease HII">
    <location>
        <begin position="1"/>
        <end position="197"/>
    </location>
</feature>
<feature type="domain" description="RNase H type-2" evidence="2">
    <location>
        <begin position="11"/>
        <end position="197"/>
    </location>
</feature>
<feature type="binding site" evidence="1">
    <location>
        <position position="17"/>
    </location>
    <ligand>
        <name>a divalent metal cation</name>
        <dbReference type="ChEBI" id="CHEBI:60240"/>
    </ligand>
</feature>
<feature type="binding site" evidence="1">
    <location>
        <position position="18"/>
    </location>
    <ligand>
        <name>a divalent metal cation</name>
        <dbReference type="ChEBI" id="CHEBI:60240"/>
    </ligand>
</feature>
<feature type="binding site" evidence="1">
    <location>
        <position position="109"/>
    </location>
    <ligand>
        <name>a divalent metal cation</name>
        <dbReference type="ChEBI" id="CHEBI:60240"/>
    </ligand>
</feature>
<name>RNH2_HAEDU</name>
<comment type="function">
    <text evidence="1">Endonuclease that specifically degrades the RNA of RNA-DNA hybrids.</text>
</comment>
<comment type="catalytic activity">
    <reaction evidence="1">
        <text>Endonucleolytic cleavage to 5'-phosphomonoester.</text>
        <dbReference type="EC" id="3.1.26.4"/>
    </reaction>
</comment>
<comment type="cofactor">
    <cofactor evidence="1">
        <name>Mn(2+)</name>
        <dbReference type="ChEBI" id="CHEBI:29035"/>
    </cofactor>
    <cofactor evidence="1">
        <name>Mg(2+)</name>
        <dbReference type="ChEBI" id="CHEBI:18420"/>
    </cofactor>
    <text evidence="1">Manganese or magnesium. Binds 1 divalent metal ion per monomer in the absence of substrate. May bind a second metal ion after substrate binding.</text>
</comment>
<comment type="subcellular location">
    <subcellularLocation>
        <location evidence="1">Cytoplasm</location>
    </subcellularLocation>
</comment>
<comment type="similarity">
    <text evidence="1">Belongs to the RNase HII family.</text>
</comment>
<organism>
    <name type="scientific">Haemophilus ducreyi (strain 35000HP / ATCC 700724)</name>
    <dbReference type="NCBI Taxonomy" id="233412"/>
    <lineage>
        <taxon>Bacteria</taxon>
        <taxon>Pseudomonadati</taxon>
        <taxon>Pseudomonadota</taxon>
        <taxon>Gammaproteobacteria</taxon>
        <taxon>Pasteurellales</taxon>
        <taxon>Pasteurellaceae</taxon>
        <taxon>Haemophilus</taxon>
    </lineage>
</organism>
<gene>
    <name evidence="1" type="primary">rnhB</name>
    <name type="ordered locus">HD_1026</name>
</gene>
<dbReference type="EC" id="3.1.26.4" evidence="1"/>
<dbReference type="EMBL" id="AE017143">
    <property type="protein sequence ID" value="AAP95904.1"/>
    <property type="molecule type" value="Genomic_DNA"/>
</dbReference>
<dbReference type="RefSeq" id="WP_010944954.1">
    <property type="nucleotide sequence ID" value="NC_002940.2"/>
</dbReference>
<dbReference type="SMR" id="Q7VMF2"/>
<dbReference type="STRING" id="233412.HD_1026"/>
<dbReference type="KEGG" id="hdu:HD_1026"/>
<dbReference type="eggNOG" id="COG0164">
    <property type="taxonomic scope" value="Bacteria"/>
</dbReference>
<dbReference type="HOGENOM" id="CLU_036532_3_2_6"/>
<dbReference type="Proteomes" id="UP000001022">
    <property type="component" value="Chromosome"/>
</dbReference>
<dbReference type="GO" id="GO:0005737">
    <property type="term" value="C:cytoplasm"/>
    <property type="evidence" value="ECO:0007669"/>
    <property type="project" value="UniProtKB-SubCell"/>
</dbReference>
<dbReference type="GO" id="GO:0032299">
    <property type="term" value="C:ribonuclease H2 complex"/>
    <property type="evidence" value="ECO:0007669"/>
    <property type="project" value="TreeGrafter"/>
</dbReference>
<dbReference type="GO" id="GO:0030145">
    <property type="term" value="F:manganese ion binding"/>
    <property type="evidence" value="ECO:0007669"/>
    <property type="project" value="UniProtKB-UniRule"/>
</dbReference>
<dbReference type="GO" id="GO:0003723">
    <property type="term" value="F:RNA binding"/>
    <property type="evidence" value="ECO:0007669"/>
    <property type="project" value="InterPro"/>
</dbReference>
<dbReference type="GO" id="GO:0004523">
    <property type="term" value="F:RNA-DNA hybrid ribonuclease activity"/>
    <property type="evidence" value="ECO:0007669"/>
    <property type="project" value="UniProtKB-UniRule"/>
</dbReference>
<dbReference type="GO" id="GO:0043137">
    <property type="term" value="P:DNA replication, removal of RNA primer"/>
    <property type="evidence" value="ECO:0007669"/>
    <property type="project" value="TreeGrafter"/>
</dbReference>
<dbReference type="GO" id="GO:0006298">
    <property type="term" value="P:mismatch repair"/>
    <property type="evidence" value="ECO:0007669"/>
    <property type="project" value="TreeGrafter"/>
</dbReference>
<dbReference type="CDD" id="cd07182">
    <property type="entry name" value="RNase_HII_bacteria_HII_like"/>
    <property type="match status" value="1"/>
</dbReference>
<dbReference type="FunFam" id="3.30.420.10:FF:000006">
    <property type="entry name" value="Ribonuclease HII"/>
    <property type="match status" value="1"/>
</dbReference>
<dbReference type="Gene3D" id="3.30.420.10">
    <property type="entry name" value="Ribonuclease H-like superfamily/Ribonuclease H"/>
    <property type="match status" value="1"/>
</dbReference>
<dbReference type="HAMAP" id="MF_00052_B">
    <property type="entry name" value="RNase_HII_B"/>
    <property type="match status" value="1"/>
</dbReference>
<dbReference type="InterPro" id="IPR022898">
    <property type="entry name" value="RNase_HII"/>
</dbReference>
<dbReference type="InterPro" id="IPR001352">
    <property type="entry name" value="RNase_HII/HIII"/>
</dbReference>
<dbReference type="InterPro" id="IPR024567">
    <property type="entry name" value="RNase_HII/HIII_dom"/>
</dbReference>
<dbReference type="InterPro" id="IPR012337">
    <property type="entry name" value="RNaseH-like_sf"/>
</dbReference>
<dbReference type="InterPro" id="IPR036397">
    <property type="entry name" value="RNaseH_sf"/>
</dbReference>
<dbReference type="NCBIfam" id="NF000594">
    <property type="entry name" value="PRK00015.1-1"/>
    <property type="match status" value="1"/>
</dbReference>
<dbReference type="NCBIfam" id="NF000595">
    <property type="entry name" value="PRK00015.1-3"/>
    <property type="match status" value="1"/>
</dbReference>
<dbReference type="NCBIfam" id="NF000596">
    <property type="entry name" value="PRK00015.1-4"/>
    <property type="match status" value="1"/>
</dbReference>
<dbReference type="PANTHER" id="PTHR10954">
    <property type="entry name" value="RIBONUCLEASE H2 SUBUNIT A"/>
    <property type="match status" value="1"/>
</dbReference>
<dbReference type="PANTHER" id="PTHR10954:SF18">
    <property type="entry name" value="RIBONUCLEASE HII"/>
    <property type="match status" value="1"/>
</dbReference>
<dbReference type="Pfam" id="PF01351">
    <property type="entry name" value="RNase_HII"/>
    <property type="match status" value="1"/>
</dbReference>
<dbReference type="SUPFAM" id="SSF53098">
    <property type="entry name" value="Ribonuclease H-like"/>
    <property type="match status" value="1"/>
</dbReference>
<dbReference type="PROSITE" id="PS51975">
    <property type="entry name" value="RNASE_H_2"/>
    <property type="match status" value="1"/>
</dbReference>
<accession>Q7VMF2</accession>
<reference key="1">
    <citation type="submission" date="2003-06" db="EMBL/GenBank/DDBJ databases">
        <title>The complete genome sequence of Haemophilus ducreyi.</title>
        <authorList>
            <person name="Munson R.S. Jr."/>
            <person name="Ray W.C."/>
            <person name="Mahairas G."/>
            <person name="Sabo P."/>
            <person name="Mungur R."/>
            <person name="Johnson L."/>
            <person name="Nguyen D."/>
            <person name="Wang J."/>
            <person name="Forst C."/>
            <person name="Hood L."/>
        </authorList>
    </citation>
    <scope>NUCLEOTIDE SEQUENCE [LARGE SCALE GENOMIC DNA]</scope>
    <source>
        <strain>35000HP / ATCC 700724</strain>
    </source>
</reference>
<protein>
    <recommendedName>
        <fullName evidence="1">Ribonuclease HII</fullName>
        <shortName evidence="1">RNase HII</shortName>
        <ecNumber evidence="1">3.1.26.4</ecNumber>
    </recommendedName>
</protein>
<evidence type="ECO:0000255" key="1">
    <source>
        <dbReference type="HAMAP-Rule" id="MF_00052"/>
    </source>
</evidence>
<evidence type="ECO:0000255" key="2">
    <source>
        <dbReference type="PROSITE-ProRule" id="PRU01319"/>
    </source>
</evidence>
<keyword id="KW-0963">Cytoplasm</keyword>
<keyword id="KW-0255">Endonuclease</keyword>
<keyword id="KW-0378">Hydrolase</keyword>
<keyword id="KW-0464">Manganese</keyword>
<keyword id="KW-0479">Metal-binding</keyword>
<keyword id="KW-0540">Nuclease</keyword>
<keyword id="KW-1185">Reference proteome</keyword>
<proteinExistence type="inferred from homology"/>
<sequence length="197" mass="21594">MRTNFIYHNANLIAGVDEVGRGPLVGAVVTAAVILDPQQPILGLADSKKLSEKKRILLATEIKQKALCWSLGRAEAEEIDQLNILHATMLAMQRAINALTIQPDFVLVDGNRIPSLNMPAQAIVKGDSLVAEISAASILAKVARDHEMQILDQQFPEYGFAQHKGYPTKLHIEKLAQFGATPFHRKSFAPVRKILGL</sequence>